<proteinExistence type="evidence at protein level"/>
<dbReference type="Proteomes" id="UP000694387">
    <property type="component" value="Unplaced"/>
</dbReference>
<dbReference type="GO" id="GO:0002080">
    <property type="term" value="C:acrosomal membrane"/>
    <property type="evidence" value="ECO:0007669"/>
    <property type="project" value="UniProtKB-SubCell"/>
</dbReference>
<dbReference type="GO" id="GO:0005576">
    <property type="term" value="C:extracellular region"/>
    <property type="evidence" value="ECO:0007669"/>
    <property type="project" value="UniProtKB-SubCell"/>
</dbReference>
<dbReference type="GO" id="GO:0001525">
    <property type="term" value="P:angiogenesis"/>
    <property type="evidence" value="ECO:0007669"/>
    <property type="project" value="UniProtKB-KW"/>
</dbReference>
<dbReference type="GO" id="GO:0007155">
    <property type="term" value="P:cell adhesion"/>
    <property type="evidence" value="ECO:0007669"/>
    <property type="project" value="UniProtKB-KW"/>
</dbReference>
<dbReference type="GO" id="GO:0007338">
    <property type="term" value="P:single fertilization"/>
    <property type="evidence" value="ECO:0007669"/>
    <property type="project" value="UniProtKB-KW"/>
</dbReference>
<dbReference type="Gene3D" id="2.10.25.10">
    <property type="entry name" value="Laminin"/>
    <property type="match status" value="1"/>
</dbReference>
<organism evidence="4">
    <name type="scientific">Equus asinus</name>
    <name type="common">Donkey</name>
    <name type="synonym">Equus africanus asinus</name>
    <dbReference type="NCBI Taxonomy" id="9793"/>
    <lineage>
        <taxon>Eukaryota</taxon>
        <taxon>Metazoa</taxon>
        <taxon>Chordata</taxon>
        <taxon>Craniata</taxon>
        <taxon>Vertebrata</taxon>
        <taxon>Euteleostomi</taxon>
        <taxon>Mammalia</taxon>
        <taxon>Eutheria</taxon>
        <taxon>Laurasiatheria</taxon>
        <taxon>Perissodactyla</taxon>
        <taxon>Equidae</taxon>
        <taxon>Equus</taxon>
    </lineage>
</organism>
<sequence length="24" mass="2599">ASGPCFPNPCQNDGECHVIDDSHR</sequence>
<accession>C0HJR4</accession>
<protein>
    <recommendedName>
        <fullName evidence="4">Lactadherin</fullName>
    </recommendedName>
    <alternativeName>
        <fullName evidence="2">MFGM</fullName>
    </alternativeName>
    <alternativeName>
        <fullName evidence="2">Milk fat globule-EGF factor 8</fullName>
        <shortName evidence="2">MFG-E8</shortName>
    </alternativeName>
</protein>
<evidence type="ECO:0000250" key="1">
    <source>
        <dbReference type="UniProtKB" id="P79385"/>
    </source>
</evidence>
<evidence type="ECO:0000250" key="2">
    <source>
        <dbReference type="UniProtKB" id="Q08431"/>
    </source>
</evidence>
<evidence type="ECO:0000269" key="3">
    <source ref="1"/>
</evidence>
<evidence type="ECO:0000303" key="4">
    <source ref="1"/>
</evidence>
<evidence type="ECO:0000305" key="5"/>
<keyword id="KW-0037">Angiogenesis</keyword>
<keyword id="KW-0130">Cell adhesion</keyword>
<keyword id="KW-0968">Cytoplasmic vesicle</keyword>
<keyword id="KW-0903">Direct protein sequencing</keyword>
<keyword id="KW-0278">Fertilization</keyword>
<keyword id="KW-0472">Membrane</keyword>
<keyword id="KW-1185">Reference proteome</keyword>
<keyword id="KW-0964">Secreted</keyword>
<name>MFGM_EQUAS</name>
<reference evidence="5" key="1">
    <citation type="submission" date="2015-02" db="UniProtKB">
        <title>Identification of equine lactadherin-derived peptides that inhibit rotavirus infection via integrin receptor competition.</title>
        <authorList>
            <person name="Civra A."/>
            <person name="Giuffrida M."/>
            <person name="Donalisio M."/>
            <person name="Napolitano L."/>
            <person name="Takada Y."/>
            <person name="Coulson B."/>
            <person name="Conti A."/>
            <person name="Lembo D."/>
        </authorList>
    </citation>
    <scope>PROTEIN SEQUENCE</scope>
</reference>
<comment type="function">
    <text evidence="2">Specific ligand for the alpha-v/beta-3 and alpha-v/beta-5 receptors. Also binds to phosphatidylserine-enriched cell surfaces in a receptor-independent manner. Zona pellucida-binding protein which may play a role in gamete interaction. Contributes to phagocytic removal of apoptotic cells in many tissues. Plays an important role in the maintenance of intestinal epithelial homeostasis and the promotion of mucosal healing. Promotes VEGF-dependent neovascularization.</text>
</comment>
<comment type="subcellular location">
    <subcellularLocation>
        <location evidence="1">Membrane</location>
        <topology evidence="1">Peripheral membrane protein</topology>
    </subcellularLocation>
    <subcellularLocation>
        <location evidence="1">Secreted</location>
    </subcellularLocation>
    <subcellularLocation>
        <location evidence="1">Cytoplasmic vesicle</location>
        <location evidence="1">Secretory vesicle</location>
        <location evidence="1">Acrosome membrane</location>
        <topology evidence="1">Peripheral membrane protein</topology>
    </subcellularLocation>
    <text evidence="1">Located in the acrosomal region of zona-pellucida bound sperm.</text>
</comment>
<feature type="chain" id="PRO_0000432998" description="Lactadherin" evidence="3">
    <location>
        <begin position="1"/>
        <end position="24" status="greater than"/>
    </location>
</feature>
<feature type="non-terminal residue" evidence="3">
    <location>
        <position position="24"/>
    </location>
</feature>
<gene>
    <name evidence="2" type="primary">MFGE8</name>
</gene>